<protein>
    <recommendedName>
        <fullName>HTH-type transcriptional regulator TrpI</fullName>
    </recommendedName>
    <alternativeName>
        <fullName>TrpBA operon transcriptional activator</fullName>
    </alternativeName>
</protein>
<sequence length="6" mass="683">MAHDLP</sequence>
<evidence type="ECO:0000305" key="1"/>
<keyword id="KW-0010">Activator</keyword>
<keyword id="KW-0028">Amino-acid biosynthesis</keyword>
<keyword id="KW-0057">Aromatic amino acid biosynthesis</keyword>
<keyword id="KW-0238">DNA-binding</keyword>
<keyword id="KW-0804">Transcription</keyword>
<keyword id="KW-0805">Transcription regulation</keyword>
<keyword id="KW-0822">Tryptophan biosynthesis</keyword>
<feature type="chain" id="PRO_0000105764" description="HTH-type transcriptional regulator TrpI">
    <location>
        <begin position="1"/>
        <end position="6" status="greater than"/>
    </location>
</feature>
<feature type="non-terminal residue">
    <location>
        <position position="6"/>
    </location>
</feature>
<comment type="function">
    <text>Activates the expression of the trpBA genes encoding the two tryptophan synthase subunits. In the absence of the inducer (indoleglycerol phosphate), TrpI binds upstream of the trpAB operon, overlapping its own promoter region.</text>
</comment>
<comment type="similarity">
    <text evidence="1">Belongs to the LysR transcriptional regulatory family.</text>
</comment>
<name>TRPI_PSEPU</name>
<organism>
    <name type="scientific">Pseudomonas putida</name>
    <name type="common">Arthrobacter siderocapsulatus</name>
    <dbReference type="NCBI Taxonomy" id="303"/>
    <lineage>
        <taxon>Bacteria</taxon>
        <taxon>Pseudomonadati</taxon>
        <taxon>Pseudomonadota</taxon>
        <taxon>Gammaproteobacteria</taxon>
        <taxon>Pseudomonadales</taxon>
        <taxon>Pseudomonadaceae</taxon>
        <taxon>Pseudomonas</taxon>
    </lineage>
</organism>
<dbReference type="EMBL" id="X13299">
    <property type="protein sequence ID" value="CAA31660.1"/>
    <property type="molecule type" value="Genomic_DNA"/>
</dbReference>
<dbReference type="GO" id="GO:0003677">
    <property type="term" value="F:DNA binding"/>
    <property type="evidence" value="ECO:0007669"/>
    <property type="project" value="UniProtKB-KW"/>
</dbReference>
<dbReference type="GO" id="GO:0000162">
    <property type="term" value="P:L-tryptophan biosynthetic process"/>
    <property type="evidence" value="ECO:0007669"/>
    <property type="project" value="UniProtKB-KW"/>
</dbReference>
<reference key="1">
    <citation type="journal article" date="1989" name="Biochimie">
        <title>DNA sequence of the tryptophan synthase genes of Pseudomonas putida.</title>
        <authorList>
            <person name="Eberly L."/>
            <person name="Crawford I.P."/>
        </authorList>
    </citation>
    <scope>NUCLEOTIDE SEQUENCE [GENOMIC DNA]</scope>
    <source>
        <strain>PPG1 C1S</strain>
    </source>
</reference>
<gene>
    <name type="primary">trpI</name>
</gene>
<accession>P36414</accession>
<proteinExistence type="inferred from homology"/>